<keyword id="KW-0175">Coiled coil</keyword>
<keyword id="KW-1185">Reference proteome</keyword>
<keyword id="KW-1188">Viral release from host cell</keyword>
<keyword id="KW-1245">Viral tail assembly</keyword>
<sequence length="815" mass="86523">MSNNVKLQVLLRAVDQASRPFKSIRTASKSLSGDIRETQKSLRELNGHASRIEGFRKTSAQLAVTGHALEKARQEAEALATQFKNTERPTRAQAKVLESAKRAAEDLQAKYNRLTDSVKRQQRELAAVGINTRNLAHDEQGLKNRISETTAQLNRQRDALVRVSAQQAKLNAVKQRYQAGKELAGNMASVGAAGVGIAAAGTMAGVKLLMPGYEFAQKNSELQAVIGVAKDSAEMAALRKQARQLGDNTAASADDAAGAQIIIAKAGGDVDAIQAATPVTLNMALANRRTMEENAALLMGMKSAFQLSNDKVAHIGDVLSMTMNKTAADFDGMSDALTYAAPVAKNAGVSIEETAAMVGALHDAKITGSMAGTGSRAVLSRLQAPTGKAWDALKELGVKTSDSKGNTRPIFTILKEMQASFEKNRLGTAQQAEYMKTIFGEEASSAAAVLMTAASTGKLDKLTAAFKASDGKTAELVNIMQDNLGGDFKAFQSAYEAVGTDLFDQQEGALRKLTQTATKYVLKLDGWIQKNKSLASTIGIIAGGALALTGIIGAIGLVAWPVITGINAIIAAAGAMGAVFTTVGSAVMTAIGAISWPVVAVVAAIVAGALLIRKYWEPVSAFFGGVVEGLKAAFAPVGELFTPLKPVFDWLGEKLQAAWQWFKNLIAPVKATQDTLNRCRDTGVMFGQALADALMLPLNAFNKLRSGIDWVLEKLGVINKESDTLDQTAARTHTATYGTGDYIPATSSYAGYQAYQPVTAPAGRSYVDQSKNEYHISLTGGTAPGTQLDRQLQDALEKYERDKRARARASMMHDG</sequence>
<name>TMP_BPP2</name>
<comment type="function">
    <text evidence="2">Serves as a base for tail tube protein polymerization and acts as a template for tail length determination.</text>
</comment>
<comment type="similarity">
    <text evidence="4">Belongs to the P2likevirus tape measure protein family.</text>
</comment>
<proteinExistence type="inferred from homology"/>
<organism>
    <name type="scientific">Escherichia phage P2</name>
    <name type="common">Bacteriophage P2</name>
    <dbReference type="NCBI Taxonomy" id="2905681"/>
    <lineage>
        <taxon>Viruses</taxon>
        <taxon>Duplodnaviria</taxon>
        <taxon>Heunggongvirae</taxon>
        <taxon>Uroviricota</taxon>
        <taxon>Caudoviricetes</taxon>
        <taxon>Peduoviridae</taxon>
        <taxon>Peduovirus</taxon>
        <taxon>Peduovirus P2</taxon>
    </lineage>
</organism>
<evidence type="ECO:0000255" key="1"/>
<evidence type="ECO:0000269" key="2">
    <source>
    </source>
</evidence>
<evidence type="ECO:0000303" key="3">
    <source>
    </source>
</evidence>
<evidence type="ECO:0000305" key="4"/>
<feature type="chain" id="PRO_0000431943" description="Probable tape measure protein">
    <location>
        <begin position="1"/>
        <end position="815"/>
    </location>
</feature>
<feature type="coiled-coil region" evidence="1">
    <location>
        <begin position="67"/>
        <end position="163"/>
    </location>
</feature>
<reference key="1">
    <citation type="submission" date="1998-05" db="EMBL/GenBank/DDBJ databases">
        <title>The complete genome of bacteriophage P2.</title>
        <authorList>
            <person name="Christie G.E."/>
            <person name="Haggard-Ljungquist E."/>
            <person name="Calendar R."/>
        </authorList>
    </citation>
    <scope>NUCLEOTIDE SEQUENCE [LARGE SCALE GENOMIC DNA]</scope>
</reference>
<reference key="2">
    <citation type="journal article" date="2002" name="J. Bacteriol.">
        <title>Programmed translational frameshift in the bacteriophage P2 FETUD tail gene operon.</title>
        <authorList>
            <person name="Christie G.E."/>
            <person name="Temple L.M."/>
            <person name="Bartlett B.A."/>
            <person name="Goodwin T.S."/>
        </authorList>
    </citation>
    <scope>FUNCTION</scope>
</reference>
<organismHost>
    <name type="scientific">Enterobacteriaceae</name>
    <dbReference type="NCBI Taxonomy" id="543"/>
</organismHost>
<gene>
    <name evidence="3" type="primary">T</name>
</gene>
<accession>O64314</accession>
<dbReference type="EMBL" id="AF063097">
    <property type="protein sequence ID" value="AAD03293.1"/>
    <property type="molecule type" value="Genomic_DNA"/>
</dbReference>
<dbReference type="RefSeq" id="NP_046782.1">
    <property type="nucleotide sequence ID" value="NC_001895.1"/>
</dbReference>
<dbReference type="SMR" id="O64314"/>
<dbReference type="GeneID" id="77440817"/>
<dbReference type="KEGG" id="vg:77440817"/>
<dbReference type="Proteomes" id="UP000009092">
    <property type="component" value="Genome"/>
</dbReference>
<dbReference type="GO" id="GO:0098003">
    <property type="term" value="P:viral tail assembly"/>
    <property type="evidence" value="ECO:0007669"/>
    <property type="project" value="UniProtKB-KW"/>
</dbReference>
<dbReference type="InterPro" id="IPR010090">
    <property type="entry name" value="Phage_tape_meas"/>
</dbReference>
<dbReference type="NCBIfam" id="TIGR01760">
    <property type="entry name" value="tape_meas_TP901"/>
    <property type="match status" value="1"/>
</dbReference>
<dbReference type="PANTHER" id="PTHR37813">
    <property type="entry name" value="FELS-2 PROPHAGE PROTEIN"/>
    <property type="match status" value="1"/>
</dbReference>
<dbReference type="PANTHER" id="PTHR37813:SF1">
    <property type="entry name" value="FELS-2 PROPHAGE PROTEIN"/>
    <property type="match status" value="1"/>
</dbReference>
<dbReference type="Pfam" id="PF10145">
    <property type="entry name" value="PhageMin_Tail"/>
    <property type="match status" value="1"/>
</dbReference>
<protein>
    <recommendedName>
        <fullName evidence="3">Probable tape measure protein</fullName>
        <shortName>TMP</shortName>
    </recommendedName>
    <alternativeName>
        <fullName evidence="3">Gene product T</fullName>
        <shortName>gpT</shortName>
    </alternativeName>
</protein>